<keyword id="KW-1185">Reference proteome</keyword>
<gene>
    <name type="primary">ywbE</name>
    <name type="ordered locus">BSU38350</name>
    <name type="ORF">ipa-20r</name>
</gene>
<name>YWBE_BACSU</name>
<reference key="1">
    <citation type="journal article" date="1993" name="Mol. Microbiol.">
        <title>Bacillus subtilis genome project: cloning and sequencing of the 97 kb region from 325 degrees to 333 degrees.</title>
        <authorList>
            <person name="Glaser P."/>
            <person name="Kunst F."/>
            <person name="Arnaud M."/>
            <person name="Coudart M.P."/>
            <person name="Gonzales W."/>
            <person name="Hullo M.-F."/>
            <person name="Ionescu M."/>
            <person name="Lubochinsky B."/>
            <person name="Marcelino L."/>
            <person name="Moszer I."/>
            <person name="Presecan E."/>
            <person name="Santana M."/>
            <person name="Schneider E."/>
            <person name="Schweizer J."/>
            <person name="Vertes A."/>
            <person name="Rapoport G."/>
            <person name="Danchin A."/>
        </authorList>
    </citation>
    <scope>NUCLEOTIDE SEQUENCE [GENOMIC DNA]</scope>
    <source>
        <strain>168</strain>
    </source>
</reference>
<reference key="2">
    <citation type="journal article" date="1997" name="Nature">
        <title>The complete genome sequence of the Gram-positive bacterium Bacillus subtilis.</title>
        <authorList>
            <person name="Kunst F."/>
            <person name="Ogasawara N."/>
            <person name="Moszer I."/>
            <person name="Albertini A.M."/>
            <person name="Alloni G."/>
            <person name="Azevedo V."/>
            <person name="Bertero M.G."/>
            <person name="Bessieres P."/>
            <person name="Bolotin A."/>
            <person name="Borchert S."/>
            <person name="Borriss R."/>
            <person name="Boursier L."/>
            <person name="Brans A."/>
            <person name="Braun M."/>
            <person name="Brignell S.C."/>
            <person name="Bron S."/>
            <person name="Brouillet S."/>
            <person name="Bruschi C.V."/>
            <person name="Caldwell B."/>
            <person name="Capuano V."/>
            <person name="Carter N.M."/>
            <person name="Choi S.-K."/>
            <person name="Codani J.-J."/>
            <person name="Connerton I.F."/>
            <person name="Cummings N.J."/>
            <person name="Daniel R.A."/>
            <person name="Denizot F."/>
            <person name="Devine K.M."/>
            <person name="Duesterhoeft A."/>
            <person name="Ehrlich S.D."/>
            <person name="Emmerson P.T."/>
            <person name="Entian K.-D."/>
            <person name="Errington J."/>
            <person name="Fabret C."/>
            <person name="Ferrari E."/>
            <person name="Foulger D."/>
            <person name="Fritz C."/>
            <person name="Fujita M."/>
            <person name="Fujita Y."/>
            <person name="Fuma S."/>
            <person name="Galizzi A."/>
            <person name="Galleron N."/>
            <person name="Ghim S.-Y."/>
            <person name="Glaser P."/>
            <person name="Goffeau A."/>
            <person name="Golightly E.J."/>
            <person name="Grandi G."/>
            <person name="Guiseppi G."/>
            <person name="Guy B.J."/>
            <person name="Haga K."/>
            <person name="Haiech J."/>
            <person name="Harwood C.R."/>
            <person name="Henaut A."/>
            <person name="Hilbert H."/>
            <person name="Holsappel S."/>
            <person name="Hosono S."/>
            <person name="Hullo M.-F."/>
            <person name="Itaya M."/>
            <person name="Jones L.-M."/>
            <person name="Joris B."/>
            <person name="Karamata D."/>
            <person name="Kasahara Y."/>
            <person name="Klaerr-Blanchard M."/>
            <person name="Klein C."/>
            <person name="Kobayashi Y."/>
            <person name="Koetter P."/>
            <person name="Koningstein G."/>
            <person name="Krogh S."/>
            <person name="Kumano M."/>
            <person name="Kurita K."/>
            <person name="Lapidus A."/>
            <person name="Lardinois S."/>
            <person name="Lauber J."/>
            <person name="Lazarevic V."/>
            <person name="Lee S.-M."/>
            <person name="Levine A."/>
            <person name="Liu H."/>
            <person name="Masuda S."/>
            <person name="Mauel C."/>
            <person name="Medigue C."/>
            <person name="Medina N."/>
            <person name="Mellado R.P."/>
            <person name="Mizuno M."/>
            <person name="Moestl D."/>
            <person name="Nakai S."/>
            <person name="Noback M."/>
            <person name="Noone D."/>
            <person name="O'Reilly M."/>
            <person name="Ogawa K."/>
            <person name="Ogiwara A."/>
            <person name="Oudega B."/>
            <person name="Park S.-H."/>
            <person name="Parro V."/>
            <person name="Pohl T.M."/>
            <person name="Portetelle D."/>
            <person name="Porwollik S."/>
            <person name="Prescott A.M."/>
            <person name="Presecan E."/>
            <person name="Pujic P."/>
            <person name="Purnelle B."/>
            <person name="Rapoport G."/>
            <person name="Rey M."/>
            <person name="Reynolds S."/>
            <person name="Rieger M."/>
            <person name="Rivolta C."/>
            <person name="Rocha E."/>
            <person name="Roche B."/>
            <person name="Rose M."/>
            <person name="Sadaie Y."/>
            <person name="Sato T."/>
            <person name="Scanlan E."/>
            <person name="Schleich S."/>
            <person name="Schroeter R."/>
            <person name="Scoffone F."/>
            <person name="Sekiguchi J."/>
            <person name="Sekowska A."/>
            <person name="Seror S.J."/>
            <person name="Serror P."/>
            <person name="Shin B.-S."/>
            <person name="Soldo B."/>
            <person name="Sorokin A."/>
            <person name="Tacconi E."/>
            <person name="Takagi T."/>
            <person name="Takahashi H."/>
            <person name="Takemaru K."/>
            <person name="Takeuchi M."/>
            <person name="Tamakoshi A."/>
            <person name="Tanaka T."/>
            <person name="Terpstra P."/>
            <person name="Tognoni A."/>
            <person name="Tosato V."/>
            <person name="Uchiyama S."/>
            <person name="Vandenbol M."/>
            <person name="Vannier F."/>
            <person name="Vassarotti A."/>
            <person name="Viari A."/>
            <person name="Wambutt R."/>
            <person name="Wedler E."/>
            <person name="Wedler H."/>
            <person name="Weitzenegger T."/>
            <person name="Winters P."/>
            <person name="Wipat A."/>
            <person name="Yamamoto H."/>
            <person name="Yamane K."/>
            <person name="Yasumoto K."/>
            <person name="Yata K."/>
            <person name="Yoshida K."/>
            <person name="Yoshikawa H.-F."/>
            <person name="Zumstein E."/>
            <person name="Yoshikawa H."/>
            <person name="Danchin A."/>
        </authorList>
    </citation>
    <scope>NUCLEOTIDE SEQUENCE [LARGE SCALE GENOMIC DNA]</scope>
    <source>
        <strain>168</strain>
    </source>
</reference>
<sequence>MNGQERNSISKGLQVDIVLKADQKTGKLTRGTVKDILTKSNFHPHGIKVRLEDGRIGRDQQIVST</sequence>
<organism>
    <name type="scientific">Bacillus subtilis (strain 168)</name>
    <dbReference type="NCBI Taxonomy" id="224308"/>
    <lineage>
        <taxon>Bacteria</taxon>
        <taxon>Bacillati</taxon>
        <taxon>Bacillota</taxon>
        <taxon>Bacilli</taxon>
        <taxon>Bacillales</taxon>
        <taxon>Bacillaceae</taxon>
        <taxon>Bacillus</taxon>
    </lineage>
</organism>
<accession>P39588</accession>
<dbReference type="EMBL" id="X73124">
    <property type="protein sequence ID" value="CAA51576.1"/>
    <property type="molecule type" value="Genomic_DNA"/>
</dbReference>
<dbReference type="EMBL" id="AL009126">
    <property type="protein sequence ID" value="CAB15861.1"/>
    <property type="molecule type" value="Genomic_DNA"/>
</dbReference>
<dbReference type="PIR" id="S39675">
    <property type="entry name" value="S39675"/>
</dbReference>
<dbReference type="RefSeq" id="NP_391714.1">
    <property type="nucleotide sequence ID" value="NC_000964.3"/>
</dbReference>
<dbReference type="RefSeq" id="WP_003243869.1">
    <property type="nucleotide sequence ID" value="NZ_OZ025638.1"/>
</dbReference>
<dbReference type="SMR" id="P39588"/>
<dbReference type="FunCoup" id="P39588">
    <property type="interactions" value="26"/>
</dbReference>
<dbReference type="STRING" id="224308.BSU38350"/>
<dbReference type="PaxDb" id="224308-BSU38350"/>
<dbReference type="EnsemblBacteria" id="CAB15861">
    <property type="protein sequence ID" value="CAB15861"/>
    <property type="gene ID" value="BSU_38350"/>
</dbReference>
<dbReference type="GeneID" id="937326"/>
<dbReference type="KEGG" id="bsu:BSU38350"/>
<dbReference type="PATRIC" id="fig|224308.179.peg.4151"/>
<dbReference type="eggNOG" id="COG4895">
    <property type="taxonomic scope" value="Bacteria"/>
</dbReference>
<dbReference type="InParanoid" id="P39588"/>
<dbReference type="OrthoDB" id="9804519at2"/>
<dbReference type="BioCyc" id="BSUB:BSU38350-MONOMER"/>
<dbReference type="Proteomes" id="UP000001570">
    <property type="component" value="Chromosome"/>
</dbReference>
<dbReference type="InterPro" id="IPR019240">
    <property type="entry name" value="DUF2196"/>
</dbReference>
<dbReference type="NCBIfam" id="TIGR03833">
    <property type="entry name" value="YwbE family protein"/>
    <property type="match status" value="1"/>
</dbReference>
<dbReference type="PANTHER" id="PTHR40069">
    <property type="entry name" value="YWBE PROTEIN"/>
    <property type="match status" value="1"/>
</dbReference>
<dbReference type="PANTHER" id="PTHR40069:SF1">
    <property type="entry name" value="YWBE PROTEIN"/>
    <property type="match status" value="1"/>
</dbReference>
<dbReference type="Pfam" id="PF09962">
    <property type="entry name" value="DUF2196"/>
    <property type="match status" value="1"/>
</dbReference>
<feature type="chain" id="PRO_0000049952" description="Uncharacterized protein YwbE">
    <location>
        <begin position="1"/>
        <end position="65"/>
    </location>
</feature>
<proteinExistence type="predicted"/>
<protein>
    <recommendedName>
        <fullName>Uncharacterized protein YwbE</fullName>
    </recommendedName>
</protein>